<reference key="1">
    <citation type="journal article" date="2007" name="Genome Res.">
        <title>Genome characteristics of facultatively symbiotic Frankia sp. strains reflect host range and host plant biogeography.</title>
        <authorList>
            <person name="Normand P."/>
            <person name="Lapierre P."/>
            <person name="Tisa L.S."/>
            <person name="Gogarten J.P."/>
            <person name="Alloisio N."/>
            <person name="Bagnarol E."/>
            <person name="Bassi C.A."/>
            <person name="Berry A.M."/>
            <person name="Bickhart D.M."/>
            <person name="Choisne N."/>
            <person name="Couloux A."/>
            <person name="Cournoyer B."/>
            <person name="Cruveiller S."/>
            <person name="Daubin V."/>
            <person name="Demange N."/>
            <person name="Francino M.P."/>
            <person name="Goltsman E."/>
            <person name="Huang Y."/>
            <person name="Kopp O.R."/>
            <person name="Labarre L."/>
            <person name="Lapidus A."/>
            <person name="Lavire C."/>
            <person name="Marechal J."/>
            <person name="Martinez M."/>
            <person name="Mastronunzio J.E."/>
            <person name="Mullin B.C."/>
            <person name="Niemann J."/>
            <person name="Pujic P."/>
            <person name="Rawnsley T."/>
            <person name="Rouy Z."/>
            <person name="Schenowitz C."/>
            <person name="Sellstedt A."/>
            <person name="Tavares F."/>
            <person name="Tomkins J.P."/>
            <person name="Vallenet D."/>
            <person name="Valverde C."/>
            <person name="Wall L.G."/>
            <person name="Wang Y."/>
            <person name="Medigue C."/>
            <person name="Benson D.R."/>
        </authorList>
    </citation>
    <scope>NUCLEOTIDE SEQUENCE [LARGE SCALE GENOMIC DNA]</scope>
    <source>
        <strain>DSM 45986 / CECT 9034 / ACN14a</strain>
    </source>
</reference>
<protein>
    <recommendedName>
        <fullName evidence="1">Pyridoxal 5'-phosphate synthase subunit PdxT</fullName>
        <ecNumber evidence="1">4.3.3.6</ecNumber>
    </recommendedName>
    <alternativeName>
        <fullName evidence="1">Pdx2</fullName>
    </alternativeName>
    <alternativeName>
        <fullName evidence="1">Pyridoxal 5'-phosphate synthase glutaminase subunit</fullName>
        <ecNumber evidence="1">3.5.1.2</ecNumber>
    </alternativeName>
</protein>
<keyword id="KW-0315">Glutamine amidotransferase</keyword>
<keyword id="KW-0378">Hydrolase</keyword>
<keyword id="KW-0456">Lyase</keyword>
<keyword id="KW-0663">Pyridoxal phosphate</keyword>
<keyword id="KW-1185">Reference proteome</keyword>
<proteinExistence type="inferred from homology"/>
<evidence type="ECO:0000255" key="1">
    <source>
        <dbReference type="HAMAP-Rule" id="MF_01615"/>
    </source>
</evidence>
<dbReference type="EC" id="4.3.3.6" evidence="1"/>
<dbReference type="EC" id="3.5.1.2" evidence="1"/>
<dbReference type="EMBL" id="CT573213">
    <property type="protein sequence ID" value="CAJ60786.1"/>
    <property type="molecule type" value="Genomic_DNA"/>
</dbReference>
<dbReference type="RefSeq" id="WP_011603302.1">
    <property type="nucleotide sequence ID" value="NC_008278.1"/>
</dbReference>
<dbReference type="SMR" id="Q0RNV0"/>
<dbReference type="STRING" id="326424.FRAAL2137"/>
<dbReference type="MEROPS" id="C26.A32"/>
<dbReference type="KEGG" id="fal:FRAAL2137"/>
<dbReference type="eggNOG" id="COG0311">
    <property type="taxonomic scope" value="Bacteria"/>
</dbReference>
<dbReference type="HOGENOM" id="CLU_069674_2_0_11"/>
<dbReference type="OrthoDB" id="9810320at2"/>
<dbReference type="UniPathway" id="UPA00245"/>
<dbReference type="Proteomes" id="UP000000657">
    <property type="component" value="Chromosome"/>
</dbReference>
<dbReference type="GO" id="GO:0005829">
    <property type="term" value="C:cytosol"/>
    <property type="evidence" value="ECO:0007669"/>
    <property type="project" value="TreeGrafter"/>
</dbReference>
<dbReference type="GO" id="GO:1903600">
    <property type="term" value="C:glutaminase complex"/>
    <property type="evidence" value="ECO:0007669"/>
    <property type="project" value="TreeGrafter"/>
</dbReference>
<dbReference type="GO" id="GO:0004359">
    <property type="term" value="F:glutaminase activity"/>
    <property type="evidence" value="ECO:0007669"/>
    <property type="project" value="UniProtKB-UniRule"/>
</dbReference>
<dbReference type="GO" id="GO:0036381">
    <property type="term" value="F:pyridoxal 5'-phosphate synthase (glutamine hydrolysing) activity"/>
    <property type="evidence" value="ECO:0007669"/>
    <property type="project" value="UniProtKB-UniRule"/>
</dbReference>
<dbReference type="GO" id="GO:0006543">
    <property type="term" value="P:glutamine catabolic process"/>
    <property type="evidence" value="ECO:0007669"/>
    <property type="project" value="UniProtKB-UniRule"/>
</dbReference>
<dbReference type="GO" id="GO:0042823">
    <property type="term" value="P:pyridoxal phosphate biosynthetic process"/>
    <property type="evidence" value="ECO:0007669"/>
    <property type="project" value="UniProtKB-UniRule"/>
</dbReference>
<dbReference type="GO" id="GO:0008614">
    <property type="term" value="P:pyridoxine metabolic process"/>
    <property type="evidence" value="ECO:0007669"/>
    <property type="project" value="TreeGrafter"/>
</dbReference>
<dbReference type="CDD" id="cd01749">
    <property type="entry name" value="GATase1_PB"/>
    <property type="match status" value="1"/>
</dbReference>
<dbReference type="FunFam" id="3.40.50.880:FF:000010">
    <property type="entry name" value="uncharacterized protein LOC100176842 isoform X2"/>
    <property type="match status" value="1"/>
</dbReference>
<dbReference type="Gene3D" id="3.40.50.880">
    <property type="match status" value="1"/>
</dbReference>
<dbReference type="HAMAP" id="MF_01615">
    <property type="entry name" value="PdxT"/>
    <property type="match status" value="1"/>
</dbReference>
<dbReference type="InterPro" id="IPR029062">
    <property type="entry name" value="Class_I_gatase-like"/>
</dbReference>
<dbReference type="InterPro" id="IPR002161">
    <property type="entry name" value="PdxT/SNO"/>
</dbReference>
<dbReference type="InterPro" id="IPR021196">
    <property type="entry name" value="PdxT/SNO_CS"/>
</dbReference>
<dbReference type="NCBIfam" id="TIGR03800">
    <property type="entry name" value="PLP_synth_Pdx2"/>
    <property type="match status" value="1"/>
</dbReference>
<dbReference type="PANTHER" id="PTHR31559">
    <property type="entry name" value="PYRIDOXAL 5'-PHOSPHATE SYNTHASE SUBUNIT SNO"/>
    <property type="match status" value="1"/>
</dbReference>
<dbReference type="PANTHER" id="PTHR31559:SF0">
    <property type="entry name" value="PYRIDOXAL 5'-PHOSPHATE SYNTHASE SUBUNIT SNO1-RELATED"/>
    <property type="match status" value="1"/>
</dbReference>
<dbReference type="Pfam" id="PF01174">
    <property type="entry name" value="SNO"/>
    <property type="match status" value="1"/>
</dbReference>
<dbReference type="PIRSF" id="PIRSF005639">
    <property type="entry name" value="Glut_amidoT_SNO"/>
    <property type="match status" value="1"/>
</dbReference>
<dbReference type="SUPFAM" id="SSF52317">
    <property type="entry name" value="Class I glutamine amidotransferase-like"/>
    <property type="match status" value="1"/>
</dbReference>
<dbReference type="PROSITE" id="PS01236">
    <property type="entry name" value="PDXT_SNO_1"/>
    <property type="match status" value="1"/>
</dbReference>
<dbReference type="PROSITE" id="PS51130">
    <property type="entry name" value="PDXT_SNO_2"/>
    <property type="match status" value="1"/>
</dbReference>
<name>PDXT_FRAAA</name>
<gene>
    <name evidence="1" type="primary">pdxT</name>
    <name type="ordered locus">FRAAL2137</name>
</gene>
<sequence>MSGPRIGILALQGDVREHARGLTDVGAQPVEVRRAAQLAEVDGLVLPGGESTTIGRLLQVFELLEPLRAAVVAGLPVFGSCAGMILLARDVVDGRPDQPLIGGLDMVVRRNAFGRQVDSFEVDLDVDGVEGPPVHAVFIRAPWVEKAGDAVEVLARVAEAPVAVRQGSLLATAFHPELTGDSRMHRLFVDIVRSSGSGR</sequence>
<accession>Q0RNV0</accession>
<organism>
    <name type="scientific">Frankia alni (strain DSM 45986 / CECT 9034 / ACN14a)</name>
    <dbReference type="NCBI Taxonomy" id="326424"/>
    <lineage>
        <taxon>Bacteria</taxon>
        <taxon>Bacillati</taxon>
        <taxon>Actinomycetota</taxon>
        <taxon>Actinomycetes</taxon>
        <taxon>Frankiales</taxon>
        <taxon>Frankiaceae</taxon>
        <taxon>Frankia</taxon>
    </lineage>
</organism>
<feature type="chain" id="PRO_0000293001" description="Pyridoxal 5'-phosphate synthase subunit PdxT">
    <location>
        <begin position="1"/>
        <end position="199"/>
    </location>
</feature>
<feature type="active site" description="Nucleophile" evidence="1">
    <location>
        <position position="81"/>
    </location>
</feature>
<feature type="active site" description="Charge relay system" evidence="1">
    <location>
        <position position="175"/>
    </location>
</feature>
<feature type="active site" description="Charge relay system" evidence="1">
    <location>
        <position position="177"/>
    </location>
</feature>
<feature type="binding site" evidence="1">
    <location>
        <begin position="49"/>
        <end position="51"/>
    </location>
    <ligand>
        <name>L-glutamine</name>
        <dbReference type="ChEBI" id="CHEBI:58359"/>
    </ligand>
</feature>
<feature type="binding site" evidence="1">
    <location>
        <position position="110"/>
    </location>
    <ligand>
        <name>L-glutamine</name>
        <dbReference type="ChEBI" id="CHEBI:58359"/>
    </ligand>
</feature>
<feature type="binding site" evidence="1">
    <location>
        <begin position="139"/>
        <end position="140"/>
    </location>
    <ligand>
        <name>L-glutamine</name>
        <dbReference type="ChEBI" id="CHEBI:58359"/>
    </ligand>
</feature>
<comment type="function">
    <text evidence="1">Catalyzes the hydrolysis of glutamine to glutamate and ammonia as part of the biosynthesis of pyridoxal 5'-phosphate. The resulting ammonia molecule is channeled to the active site of PdxS.</text>
</comment>
<comment type="catalytic activity">
    <reaction evidence="1">
        <text>aldehydo-D-ribose 5-phosphate + D-glyceraldehyde 3-phosphate + L-glutamine = pyridoxal 5'-phosphate + L-glutamate + phosphate + 3 H2O + H(+)</text>
        <dbReference type="Rhea" id="RHEA:31507"/>
        <dbReference type="ChEBI" id="CHEBI:15377"/>
        <dbReference type="ChEBI" id="CHEBI:15378"/>
        <dbReference type="ChEBI" id="CHEBI:29985"/>
        <dbReference type="ChEBI" id="CHEBI:43474"/>
        <dbReference type="ChEBI" id="CHEBI:58273"/>
        <dbReference type="ChEBI" id="CHEBI:58359"/>
        <dbReference type="ChEBI" id="CHEBI:59776"/>
        <dbReference type="ChEBI" id="CHEBI:597326"/>
        <dbReference type="EC" id="4.3.3.6"/>
    </reaction>
</comment>
<comment type="catalytic activity">
    <reaction evidence="1">
        <text>L-glutamine + H2O = L-glutamate + NH4(+)</text>
        <dbReference type="Rhea" id="RHEA:15889"/>
        <dbReference type="ChEBI" id="CHEBI:15377"/>
        <dbReference type="ChEBI" id="CHEBI:28938"/>
        <dbReference type="ChEBI" id="CHEBI:29985"/>
        <dbReference type="ChEBI" id="CHEBI:58359"/>
        <dbReference type="EC" id="3.5.1.2"/>
    </reaction>
</comment>
<comment type="pathway">
    <text evidence="1">Cofactor biosynthesis; pyridoxal 5'-phosphate biosynthesis.</text>
</comment>
<comment type="subunit">
    <text evidence="1">In the presence of PdxS, forms a dodecamer of heterodimers. Only shows activity in the heterodimer.</text>
</comment>
<comment type="similarity">
    <text evidence="1">Belongs to the glutaminase PdxT/SNO family.</text>
</comment>